<evidence type="ECO:0000255" key="1"/>
<evidence type="ECO:0000305" key="2"/>
<keyword id="KW-1003">Cell membrane</keyword>
<keyword id="KW-0472">Membrane</keyword>
<keyword id="KW-1185">Reference proteome</keyword>
<keyword id="KW-0812">Transmembrane</keyword>
<keyword id="KW-1133">Transmembrane helix</keyword>
<gene>
    <name type="ordered locus">aq_1828</name>
</gene>
<sequence>MKYKGTGSLILTALIGGIPSSTAVTMAFSNLSRKFSYLSELFFFSIILSWLVMFFRVIFYTFIIFEGMIYKLVLLLLPYFALLLMFAIFLYLKGNKNHEEGGSMSIKNPFSLSQAFTFGLIYSTISVISHYLKTHFGDEGIYVLSFLSGIMDIDAITLLLARLSDKGEIGVDVAAMGILLAVMSNNLFKSGYAIIFGSKKLKIYFLFVALFTLIYTTTLLILFDKLHMSS</sequence>
<organism>
    <name type="scientific">Aquifex aeolicus (strain VF5)</name>
    <dbReference type="NCBI Taxonomy" id="224324"/>
    <lineage>
        <taxon>Bacteria</taxon>
        <taxon>Pseudomonadati</taxon>
        <taxon>Aquificota</taxon>
        <taxon>Aquificia</taxon>
        <taxon>Aquificales</taxon>
        <taxon>Aquificaceae</taxon>
        <taxon>Aquifex</taxon>
    </lineage>
</organism>
<proteinExistence type="predicted"/>
<feature type="chain" id="PRO_0000186949" description="Uncharacterized protein aq_1828">
    <location>
        <begin position="1"/>
        <end position="230"/>
    </location>
</feature>
<feature type="transmembrane region" description="Helical" evidence="1">
    <location>
        <begin position="8"/>
        <end position="28"/>
    </location>
</feature>
<feature type="transmembrane region" description="Helical" evidence="1">
    <location>
        <begin position="45"/>
        <end position="65"/>
    </location>
</feature>
<feature type="transmembrane region" description="Helical" evidence="1">
    <location>
        <begin position="72"/>
        <end position="92"/>
    </location>
</feature>
<feature type="transmembrane region" description="Helical" evidence="1">
    <location>
        <begin position="109"/>
        <end position="129"/>
    </location>
</feature>
<feature type="transmembrane region" description="Helical" evidence="1">
    <location>
        <begin position="141"/>
        <end position="161"/>
    </location>
</feature>
<feature type="transmembrane region" description="Helical" evidence="1">
    <location>
        <begin position="176"/>
        <end position="196"/>
    </location>
</feature>
<feature type="transmembrane region" description="Helical" evidence="1">
    <location>
        <begin position="203"/>
        <end position="223"/>
    </location>
</feature>
<dbReference type="EMBL" id="AE000657">
    <property type="protein sequence ID" value="AAC07661.1"/>
    <property type="molecule type" value="Genomic_DNA"/>
</dbReference>
<dbReference type="RefSeq" id="NP_214254.1">
    <property type="nucleotide sequence ID" value="NC_000918.1"/>
</dbReference>
<dbReference type="EnsemblBacteria" id="AAC07661">
    <property type="protein sequence ID" value="AAC07661"/>
    <property type="gene ID" value="aq_1827a"/>
</dbReference>
<dbReference type="KEGG" id="aae:aq_1827a"/>
<dbReference type="eggNOG" id="COG3174">
    <property type="taxonomic scope" value="Bacteria"/>
</dbReference>
<dbReference type="HOGENOM" id="CLU_1202795_0_0_0"/>
<dbReference type="InParanoid" id="O67688"/>
<dbReference type="OrthoDB" id="9813718at2"/>
<dbReference type="Proteomes" id="UP000000798">
    <property type="component" value="Chromosome"/>
</dbReference>
<dbReference type="GO" id="GO:0005886">
    <property type="term" value="C:plasma membrane"/>
    <property type="evidence" value="ECO:0007669"/>
    <property type="project" value="UniProtKB-SubCell"/>
</dbReference>
<dbReference type="InterPro" id="IPR025105">
    <property type="entry name" value="DUF4010"/>
</dbReference>
<dbReference type="PANTHER" id="PTHR39084:SF1">
    <property type="entry name" value="DUF4010 DOMAIN-CONTAINING PROTEIN"/>
    <property type="match status" value="1"/>
</dbReference>
<dbReference type="PANTHER" id="PTHR39084">
    <property type="entry name" value="MEMBRANE PROTEIN-RELATED"/>
    <property type="match status" value="1"/>
</dbReference>
<dbReference type="Pfam" id="PF13194">
    <property type="entry name" value="DUF4010"/>
    <property type="match status" value="1"/>
</dbReference>
<reference key="1">
    <citation type="journal article" date="1998" name="Nature">
        <title>The complete genome of the hyperthermophilic bacterium Aquifex aeolicus.</title>
        <authorList>
            <person name="Deckert G."/>
            <person name="Warren P.V."/>
            <person name="Gaasterland T."/>
            <person name="Young W.G."/>
            <person name="Lenox A.L."/>
            <person name="Graham D.E."/>
            <person name="Overbeek R."/>
            <person name="Snead M.A."/>
            <person name="Keller M."/>
            <person name="Aujay M."/>
            <person name="Huber R."/>
            <person name="Feldman R.A."/>
            <person name="Short J.M."/>
            <person name="Olsen G.J."/>
            <person name="Swanson R.V."/>
        </authorList>
    </citation>
    <scope>NUCLEOTIDE SEQUENCE [LARGE SCALE GENOMIC DNA]</scope>
    <source>
        <strain>VF5</strain>
    </source>
</reference>
<name>Y1828_AQUAE</name>
<protein>
    <recommendedName>
        <fullName>Uncharacterized protein aq_1828</fullName>
    </recommendedName>
</protein>
<accession>O67688</accession>
<comment type="subcellular location">
    <subcellularLocation>
        <location evidence="2">Cell membrane</location>
        <topology evidence="2">Multi-pass membrane protein</topology>
    </subcellularLocation>
</comment>
<comment type="similarity">
    <text evidence="2">To P.aeruginosa PA0043 and M.thermoautotrophicum MTH1451.</text>
</comment>